<keyword id="KW-0067">ATP-binding</keyword>
<keyword id="KW-0963">Cytoplasm</keyword>
<keyword id="KW-0418">Kinase</keyword>
<keyword id="KW-0479">Metal-binding</keyword>
<keyword id="KW-0547">Nucleotide-binding</keyword>
<keyword id="KW-0597">Phosphoprotein</keyword>
<keyword id="KW-0677">Repeat</keyword>
<keyword id="KW-0808">Transferase</keyword>
<keyword id="KW-0862">Zinc</keyword>
<keyword id="KW-0863">Zinc-finger</keyword>
<comment type="function">
    <text evidence="1">Phosphorylates diacylglycerol (DAG) to generate phosphatidic acid (PA).</text>
</comment>
<comment type="catalytic activity">
    <reaction>
        <text>a 1,2-diacyl-sn-glycerol + ATP = a 1,2-diacyl-sn-glycero-3-phosphate + ADP + H(+)</text>
        <dbReference type="Rhea" id="RHEA:10272"/>
        <dbReference type="ChEBI" id="CHEBI:15378"/>
        <dbReference type="ChEBI" id="CHEBI:17815"/>
        <dbReference type="ChEBI" id="CHEBI:30616"/>
        <dbReference type="ChEBI" id="CHEBI:58608"/>
        <dbReference type="ChEBI" id="CHEBI:456216"/>
        <dbReference type="EC" id="2.7.1.107"/>
    </reaction>
</comment>
<comment type="subcellular location">
    <subcellularLocation>
        <location evidence="1">Cytoplasm</location>
    </subcellularLocation>
</comment>
<comment type="similarity">
    <text evidence="2">Belongs to the eukaryotic diacylglycerol kinase family.</text>
</comment>
<comment type="sequence caution" evidence="8">
    <conflict type="erroneous gene model prediction">
        <sequence resource="EMBL-CDS" id="EDW96330"/>
    </conflict>
</comment>
<name>DGKH_DROYA</name>
<accession>B4PRE2</accession>
<proteinExistence type="inferred from homology"/>
<gene>
    <name type="ORF">GE24946</name>
</gene>
<evidence type="ECO:0000250" key="1">
    <source>
        <dbReference type="UniProtKB" id="Q86XP1"/>
    </source>
</evidence>
<evidence type="ECO:0000255" key="2"/>
<evidence type="ECO:0000255" key="3">
    <source>
        <dbReference type="PROSITE-ProRule" id="PRU00145"/>
    </source>
</evidence>
<evidence type="ECO:0000255" key="4">
    <source>
        <dbReference type="PROSITE-ProRule" id="PRU00184"/>
    </source>
</evidence>
<evidence type="ECO:0000255" key="5">
    <source>
        <dbReference type="PROSITE-ProRule" id="PRU00226"/>
    </source>
</evidence>
<evidence type="ECO:0000255" key="6">
    <source>
        <dbReference type="PROSITE-ProRule" id="PRU00783"/>
    </source>
</evidence>
<evidence type="ECO:0000256" key="7">
    <source>
        <dbReference type="SAM" id="MobiDB-lite"/>
    </source>
</evidence>
<evidence type="ECO:0000305" key="8"/>
<evidence type="ECO:0000312" key="9">
    <source>
        <dbReference type="EMBL" id="EDW96330.1"/>
    </source>
</evidence>
<organism>
    <name type="scientific">Drosophila yakuba</name>
    <name type="common">Fruit fly</name>
    <dbReference type="NCBI Taxonomy" id="7245"/>
    <lineage>
        <taxon>Eukaryota</taxon>
        <taxon>Metazoa</taxon>
        <taxon>Ecdysozoa</taxon>
        <taxon>Arthropoda</taxon>
        <taxon>Hexapoda</taxon>
        <taxon>Insecta</taxon>
        <taxon>Pterygota</taxon>
        <taxon>Neoptera</taxon>
        <taxon>Endopterygota</taxon>
        <taxon>Diptera</taxon>
        <taxon>Brachycera</taxon>
        <taxon>Muscomorpha</taxon>
        <taxon>Ephydroidea</taxon>
        <taxon>Drosophilidae</taxon>
        <taxon>Drosophila</taxon>
        <taxon>Sophophora</taxon>
    </lineage>
</organism>
<sequence length="1917" mass="214006">MSHLKLDTLHVQRSPRGSRRSSRSSGRSSACSSGSISPVPIIPIISISHDGDESESESEIETEPARLFQRRMSIKCTNNLAAIIKEGFLLKHTWSFQRWRRRYFPLKRNMLFYAKDEKCDVFDDIDLSDLCYFECGIKNVNHSFQIITPTRSLVLCAESRREMEDWLGSLKTATAPQRPRGDSFLIEQHDILSNHHHWYATSHARPTYCNVCRDALSGVTSHGLSCEVCKCKVHKRCAAKSIANCKWTTLASVGKDIIEQADGSIIMPHQWMEGNLPVSSMCAVCKKTCGSVLRLQDWRCLWCRATVHVACRPQMAVACPIGPAKLSVVPPTSVHSISTDDAWDVASPKGNFSPLLVFVNSKSGDNQGVKFLRRFKQLLNPAQVFDLISTGPSLGLRLFRHFEMFRILVCSGDGSVGWVLSEIDRFNMHKQCQVAVMPLGTGNDLARVLGWGSSCDDDTHLPQILERYESASTKMLDRWSIMVFEKAIPVPKTPKMSISTEQEAMLTGMVTSANHHLRFIVETSDTQTLISSTRNLCDTVDDLVCRISEHHKDDEQLAVKCEILRQKLNMLLDALQEEEMGAHSGDDLIATIRSLIARSIPVTPGSSAYLLNPNISIEKTEKDQINTKERRNSRSLRSSEKEALQCRANSVKRAIYNVVEHSEPGRPKRYQRKLSITPFEALKLPTTASGESSPCTSPLPIIPPINIISPTMETSRLTCISPLPDTRRDSVDENFFNSINLPAPRQFADSRRSSGVPEVIQEIEEGANGETMYRRCRMSLTGGANIDDAGNRLSPCSDGGENTPTERKVDFLRVPIHTGEPIVDPLCDYRPHEVFERTYYMTREMDKDKEKDKENDKTVEIDKEKDNCVAKEDSIPAERLVHTCNLQVPGVVVTPNTQNVYSSASITIIDTDAQTTTEQSSSDDLGGEASDILSAISNEECSVASEIFDKQDAGQTVGDIIQNMDASNFTHIDSPETSDETEAMPGESIMDDISSVLGHDITYALQDNTLTDDTTTLCSEHAGPPKPPRKKSLSALSRTQAHPRRRNSSPPRIARLARMDSDDNPQQFGFENIVFEIDNRCDDQKMREPPRYCSLAQFVEGNDIARQSFKQLMLEQQQRDGDNDTEYPEQQQTPTNKGPNSLATTSEDELSAQTAIKIEIHDIDATVRNINSSMKPNTILTTSTSPTKKSGHGQDISVVVRPPTPLRGDSIKPTASLMPVSSGGAMAVSMNCSGMLGVRAMNASEIRRHSSHAPGLAVREFDKDKDRRHSGFNPNQLTLDPEHARFLSSSPAASRRISCGSLFKKKNKKIATKRSYGLFSVRFFVVAEPDFRLATLALIRPLIPLPNEALPNLQSLKGSKSSLFMGSTLFGFDHLASAEKDKDEKGGKDKDKTPTEETNRKLPIINPLVRLPNWPNLANGGGFISKCLLANADTLCAAVSPLMDPDETLLAGYHEKCVMNNYFGIGIDAKISLDFHNKREEHPEKCRSRARNYMWYGVLGSKQLLQKTCKNLEQRVQLECDGQRIPLPELQGIVILNIPSFMGGTNFWGSSTKKDDIFLPPSFDDRVLEVVAVFGSVQMAASRLINLQHHRIAQCQSVQINILGDEEIPIQVDGEAWLQPPGMIRILHKNRVQMLCRNRSLELSLKSWQEKQRQHSISIQRDASSTASEHANSTDEVISERECYVLLNFIEAVSSLVKWVKFLIISHPALQHDLYEVACRASEALESIHPQGKLLEGPSLRTKLVEVIDSSRQLYDDACTLLRDRGHSLILREDLETKLSAALANMEMELKKCSVQKCIDGKLRAYFNVLAPNEESDGRRKSRPFWVRLRSGSTAGQQAFKPPLTNTREAASNWSVNEVVTWLETMQLSEYVDSFLKNDIRGKELLTLGRRDLKDLGVVKVGHVKRILQAIKDLSEN</sequence>
<protein>
    <recommendedName>
        <fullName evidence="1">Diacylglycerol kinase eta</fullName>
        <shortName evidence="1">DAG kinase eta</shortName>
        <ecNumber>2.7.1.107</ecNumber>
    </recommendedName>
</protein>
<reference evidence="9" key="1">
    <citation type="journal article" date="2007" name="Nature">
        <title>Evolution of genes and genomes on the Drosophila phylogeny.</title>
        <authorList>
            <consortium name="Drosophila 12 genomes consortium"/>
        </authorList>
    </citation>
    <scope>NUCLEOTIDE SEQUENCE [LARGE SCALE GENOMIC DNA]</scope>
    <source>
        <strain evidence="9">Tai18E2 / Tucson 14021-0261.01</strain>
    </source>
</reference>
<feature type="chain" id="PRO_0000375991" description="Diacylglycerol kinase eta">
    <location>
        <begin position="1"/>
        <end position="1917"/>
    </location>
</feature>
<feature type="domain" description="PH" evidence="3">
    <location>
        <begin position="82"/>
        <end position="175"/>
    </location>
</feature>
<feature type="domain" description="DAGKc" evidence="6">
    <location>
        <begin position="350"/>
        <end position="486"/>
    </location>
</feature>
<feature type="domain" description="SAM" evidence="4">
    <location>
        <begin position="1854"/>
        <end position="1917"/>
    </location>
</feature>
<feature type="zinc finger region" description="Phorbol-ester/DAG-type 1" evidence="5">
    <location>
        <begin position="195"/>
        <end position="245"/>
    </location>
</feature>
<feature type="zinc finger region" description="Phorbol-ester/DAG-type 2" evidence="5">
    <location>
        <begin position="268"/>
        <end position="319"/>
    </location>
</feature>
<feature type="region of interest" description="Disordered" evidence="7">
    <location>
        <begin position="1"/>
        <end position="37"/>
    </location>
</feature>
<feature type="region of interest" description="Disordered" evidence="7">
    <location>
        <begin position="1015"/>
        <end position="1053"/>
    </location>
</feature>
<feature type="region of interest" description="Disordered" evidence="7">
    <location>
        <begin position="1114"/>
        <end position="1149"/>
    </location>
</feature>
<feature type="region of interest" description="Disordered" evidence="7">
    <location>
        <begin position="1380"/>
        <end position="1399"/>
    </location>
</feature>
<feature type="compositionally biased region" description="Basic and acidic residues" evidence="7">
    <location>
        <begin position="1"/>
        <end position="10"/>
    </location>
</feature>
<feature type="compositionally biased region" description="Low complexity" evidence="7">
    <location>
        <begin position="23"/>
        <end position="37"/>
    </location>
</feature>
<feature type="compositionally biased region" description="Polar residues" evidence="7">
    <location>
        <begin position="1128"/>
        <end position="1145"/>
    </location>
</feature>
<dbReference type="EC" id="2.7.1.107"/>
<dbReference type="EMBL" id="CM000160">
    <property type="protein sequence ID" value="EDW96330.1"/>
    <property type="status" value="ALT_SEQ"/>
    <property type="molecule type" value="Genomic_DNA"/>
</dbReference>
<dbReference type="SMR" id="B4PRE2"/>
<dbReference type="GeneID" id="6536003"/>
<dbReference type="eggNOG" id="KOG1170">
    <property type="taxonomic scope" value="Eukaryota"/>
</dbReference>
<dbReference type="OrthoDB" id="196165at2759"/>
<dbReference type="Proteomes" id="UP000002282">
    <property type="component" value="Chromosome 3R"/>
</dbReference>
<dbReference type="GO" id="GO:0005737">
    <property type="term" value="C:cytoplasm"/>
    <property type="evidence" value="ECO:0007669"/>
    <property type="project" value="UniProtKB-SubCell"/>
</dbReference>
<dbReference type="GO" id="GO:0005886">
    <property type="term" value="C:plasma membrane"/>
    <property type="evidence" value="ECO:0007669"/>
    <property type="project" value="TreeGrafter"/>
</dbReference>
<dbReference type="GO" id="GO:0005524">
    <property type="term" value="F:ATP binding"/>
    <property type="evidence" value="ECO:0007669"/>
    <property type="project" value="UniProtKB-KW"/>
</dbReference>
<dbReference type="GO" id="GO:0004143">
    <property type="term" value="F:ATP-dependent diacylglycerol kinase activity"/>
    <property type="evidence" value="ECO:0007669"/>
    <property type="project" value="UniProtKB-EC"/>
</dbReference>
<dbReference type="GO" id="GO:0008270">
    <property type="term" value="F:zinc ion binding"/>
    <property type="evidence" value="ECO:0007669"/>
    <property type="project" value="UniProtKB-KW"/>
</dbReference>
<dbReference type="GO" id="GO:0046486">
    <property type="term" value="P:glycerolipid metabolic process"/>
    <property type="evidence" value="ECO:0007669"/>
    <property type="project" value="UniProtKB-ARBA"/>
</dbReference>
<dbReference type="GO" id="GO:0007200">
    <property type="term" value="P:phospholipase C-activating G protein-coupled receptor signaling pathway"/>
    <property type="evidence" value="ECO:0007669"/>
    <property type="project" value="InterPro"/>
</dbReference>
<dbReference type="CDD" id="cd20800">
    <property type="entry name" value="C1_DGK_typeII_rpt1"/>
    <property type="match status" value="1"/>
</dbReference>
<dbReference type="CDD" id="cd20852">
    <property type="entry name" value="C1_DGK_typeII_rpt2"/>
    <property type="match status" value="1"/>
</dbReference>
<dbReference type="CDD" id="cd13274">
    <property type="entry name" value="PH_DGK_type2"/>
    <property type="match status" value="1"/>
</dbReference>
<dbReference type="CDD" id="cd09507">
    <property type="entry name" value="SAM_DGK-delta-eta"/>
    <property type="match status" value="1"/>
</dbReference>
<dbReference type="FunFam" id="1.10.150.50:FF:000021">
    <property type="entry name" value="Diacylglycerol kinase"/>
    <property type="match status" value="1"/>
</dbReference>
<dbReference type="FunFam" id="2.30.29.30:FF:000313">
    <property type="entry name" value="Diacylglycerol kinase"/>
    <property type="match status" value="1"/>
</dbReference>
<dbReference type="FunFam" id="2.60.200.40:FF:000001">
    <property type="entry name" value="Diacylglycerol kinase"/>
    <property type="match status" value="1"/>
</dbReference>
<dbReference type="FunFam" id="3.30.60.20:FF:000002">
    <property type="entry name" value="Diacylglycerol kinase"/>
    <property type="match status" value="1"/>
</dbReference>
<dbReference type="FunFam" id="3.30.60.20:FF:000029">
    <property type="entry name" value="Diacylglycerol kinase"/>
    <property type="match status" value="1"/>
</dbReference>
<dbReference type="FunFam" id="3.40.50.10330:FF:000001">
    <property type="entry name" value="Diacylglycerol kinase"/>
    <property type="match status" value="1"/>
</dbReference>
<dbReference type="Gene3D" id="2.60.200.40">
    <property type="match status" value="1"/>
</dbReference>
<dbReference type="Gene3D" id="3.30.60.20">
    <property type="match status" value="2"/>
</dbReference>
<dbReference type="Gene3D" id="2.30.29.30">
    <property type="entry name" value="Pleckstrin-homology domain (PH domain)/Phosphotyrosine-binding domain (PTB)"/>
    <property type="match status" value="1"/>
</dbReference>
<dbReference type="Gene3D" id="3.40.50.10330">
    <property type="entry name" value="Probable inorganic polyphosphate/atp-NAD kinase, domain 1"/>
    <property type="match status" value="1"/>
</dbReference>
<dbReference type="Gene3D" id="1.10.150.50">
    <property type="entry name" value="Transcription Factor, Ets-1"/>
    <property type="match status" value="1"/>
</dbReference>
<dbReference type="InterPro" id="IPR017438">
    <property type="entry name" value="ATP-NAD_kinase_N"/>
</dbReference>
<dbReference type="InterPro" id="IPR046349">
    <property type="entry name" value="C1-like_sf"/>
</dbReference>
<dbReference type="InterPro" id="IPR037607">
    <property type="entry name" value="DGK"/>
</dbReference>
<dbReference type="InterPro" id="IPR054474">
    <property type="entry name" value="DGKD_4H"/>
</dbReference>
<dbReference type="InterPro" id="IPR000756">
    <property type="entry name" value="Diacylglycerol_kin_accessory"/>
</dbReference>
<dbReference type="InterPro" id="IPR001206">
    <property type="entry name" value="Diacylglycerol_kinase_cat_dom"/>
</dbReference>
<dbReference type="InterPro" id="IPR016064">
    <property type="entry name" value="NAD/diacylglycerol_kinase_sf"/>
</dbReference>
<dbReference type="InterPro" id="IPR002219">
    <property type="entry name" value="PE/DAG-bd"/>
</dbReference>
<dbReference type="InterPro" id="IPR011993">
    <property type="entry name" value="PH-like_dom_sf"/>
</dbReference>
<dbReference type="InterPro" id="IPR001849">
    <property type="entry name" value="PH_domain"/>
</dbReference>
<dbReference type="InterPro" id="IPR001660">
    <property type="entry name" value="SAM"/>
</dbReference>
<dbReference type="InterPro" id="IPR013761">
    <property type="entry name" value="SAM/pointed_sf"/>
</dbReference>
<dbReference type="PANTHER" id="PTHR11255">
    <property type="entry name" value="DIACYLGLYCEROL KINASE"/>
    <property type="match status" value="1"/>
</dbReference>
<dbReference type="PANTHER" id="PTHR11255:SF109">
    <property type="entry name" value="DIACYLGLYCEROL KINASE ETA"/>
    <property type="match status" value="1"/>
</dbReference>
<dbReference type="Pfam" id="PF00130">
    <property type="entry name" value="C1_1"/>
    <property type="match status" value="2"/>
</dbReference>
<dbReference type="Pfam" id="PF00609">
    <property type="entry name" value="DAGK_acc"/>
    <property type="match status" value="1"/>
</dbReference>
<dbReference type="Pfam" id="PF00781">
    <property type="entry name" value="DAGK_cat"/>
    <property type="match status" value="1"/>
</dbReference>
<dbReference type="Pfam" id="PF22944">
    <property type="entry name" value="DGKD_4H"/>
    <property type="match status" value="1"/>
</dbReference>
<dbReference type="Pfam" id="PF00169">
    <property type="entry name" value="PH"/>
    <property type="match status" value="1"/>
</dbReference>
<dbReference type="Pfam" id="PF00536">
    <property type="entry name" value="SAM_1"/>
    <property type="match status" value="1"/>
</dbReference>
<dbReference type="SMART" id="SM00109">
    <property type="entry name" value="C1"/>
    <property type="match status" value="2"/>
</dbReference>
<dbReference type="SMART" id="SM00045">
    <property type="entry name" value="DAGKa"/>
    <property type="match status" value="1"/>
</dbReference>
<dbReference type="SMART" id="SM00046">
    <property type="entry name" value="DAGKc"/>
    <property type="match status" value="1"/>
</dbReference>
<dbReference type="SMART" id="SM00233">
    <property type="entry name" value="PH"/>
    <property type="match status" value="1"/>
</dbReference>
<dbReference type="SMART" id="SM00454">
    <property type="entry name" value="SAM"/>
    <property type="match status" value="1"/>
</dbReference>
<dbReference type="SUPFAM" id="SSF57889">
    <property type="entry name" value="Cysteine-rich domain"/>
    <property type="match status" value="2"/>
</dbReference>
<dbReference type="SUPFAM" id="SSF111331">
    <property type="entry name" value="NAD kinase/diacylglycerol kinase-like"/>
    <property type="match status" value="2"/>
</dbReference>
<dbReference type="SUPFAM" id="SSF50729">
    <property type="entry name" value="PH domain-like"/>
    <property type="match status" value="1"/>
</dbReference>
<dbReference type="SUPFAM" id="SSF47769">
    <property type="entry name" value="SAM/Pointed domain"/>
    <property type="match status" value="1"/>
</dbReference>
<dbReference type="PROSITE" id="PS50146">
    <property type="entry name" value="DAGK"/>
    <property type="match status" value="1"/>
</dbReference>
<dbReference type="PROSITE" id="PS50003">
    <property type="entry name" value="PH_DOMAIN"/>
    <property type="match status" value="1"/>
</dbReference>
<dbReference type="PROSITE" id="PS50105">
    <property type="entry name" value="SAM_DOMAIN"/>
    <property type="match status" value="1"/>
</dbReference>
<dbReference type="PROSITE" id="PS00479">
    <property type="entry name" value="ZF_DAG_PE_1"/>
    <property type="match status" value="2"/>
</dbReference>
<dbReference type="PROSITE" id="PS50081">
    <property type="entry name" value="ZF_DAG_PE_2"/>
    <property type="match status" value="2"/>
</dbReference>